<feature type="chain" id="PRO_0000226179" description="Ketol-acid reductoisomerase (NADP(+))">
    <location>
        <begin position="1"/>
        <end position="339"/>
    </location>
</feature>
<feature type="domain" description="KARI N-terminal Rossmann" evidence="2">
    <location>
        <begin position="1"/>
        <end position="182"/>
    </location>
</feature>
<feature type="domain" description="KARI C-terminal knotted" evidence="3">
    <location>
        <begin position="183"/>
        <end position="328"/>
    </location>
</feature>
<feature type="active site" evidence="1">
    <location>
        <position position="108"/>
    </location>
</feature>
<feature type="binding site" evidence="1">
    <location>
        <begin position="24"/>
        <end position="27"/>
    </location>
    <ligand>
        <name>NADP(+)</name>
        <dbReference type="ChEBI" id="CHEBI:58349"/>
    </ligand>
</feature>
<feature type="binding site" evidence="1">
    <location>
        <position position="48"/>
    </location>
    <ligand>
        <name>NADP(+)</name>
        <dbReference type="ChEBI" id="CHEBI:58349"/>
    </ligand>
</feature>
<feature type="binding site" evidence="1">
    <location>
        <position position="51"/>
    </location>
    <ligand>
        <name>NADP(+)</name>
        <dbReference type="ChEBI" id="CHEBI:58349"/>
    </ligand>
</feature>
<feature type="binding site" evidence="1">
    <location>
        <begin position="83"/>
        <end position="86"/>
    </location>
    <ligand>
        <name>NADP(+)</name>
        <dbReference type="ChEBI" id="CHEBI:58349"/>
    </ligand>
</feature>
<feature type="binding site" evidence="1">
    <location>
        <position position="134"/>
    </location>
    <ligand>
        <name>NADP(+)</name>
        <dbReference type="ChEBI" id="CHEBI:58349"/>
    </ligand>
</feature>
<feature type="binding site" evidence="1">
    <location>
        <position position="191"/>
    </location>
    <ligand>
        <name>Mg(2+)</name>
        <dbReference type="ChEBI" id="CHEBI:18420"/>
        <label>1</label>
    </ligand>
</feature>
<feature type="binding site" evidence="1">
    <location>
        <position position="191"/>
    </location>
    <ligand>
        <name>Mg(2+)</name>
        <dbReference type="ChEBI" id="CHEBI:18420"/>
        <label>2</label>
    </ligand>
</feature>
<feature type="binding site" evidence="1">
    <location>
        <position position="195"/>
    </location>
    <ligand>
        <name>Mg(2+)</name>
        <dbReference type="ChEBI" id="CHEBI:18420"/>
        <label>1</label>
    </ligand>
</feature>
<feature type="binding site" evidence="1">
    <location>
        <position position="227"/>
    </location>
    <ligand>
        <name>Mg(2+)</name>
        <dbReference type="ChEBI" id="CHEBI:18420"/>
        <label>2</label>
    </ligand>
</feature>
<feature type="binding site" evidence="1">
    <location>
        <position position="231"/>
    </location>
    <ligand>
        <name>Mg(2+)</name>
        <dbReference type="ChEBI" id="CHEBI:18420"/>
        <label>2</label>
    </ligand>
</feature>
<feature type="binding site" evidence="1">
    <location>
        <position position="252"/>
    </location>
    <ligand>
        <name>substrate</name>
    </ligand>
</feature>
<gene>
    <name evidence="1" type="primary">ilvC</name>
    <name type="ordered locus">GOX1089</name>
</gene>
<organism>
    <name type="scientific">Gluconobacter oxydans (strain 621H)</name>
    <name type="common">Gluconobacter suboxydans</name>
    <dbReference type="NCBI Taxonomy" id="290633"/>
    <lineage>
        <taxon>Bacteria</taxon>
        <taxon>Pseudomonadati</taxon>
        <taxon>Pseudomonadota</taxon>
        <taxon>Alphaproteobacteria</taxon>
        <taxon>Acetobacterales</taxon>
        <taxon>Acetobacteraceae</taxon>
        <taxon>Gluconobacter</taxon>
    </lineage>
</organism>
<reference key="1">
    <citation type="journal article" date="2005" name="Nat. Biotechnol.">
        <title>Complete genome sequence of the acetic acid bacterium Gluconobacter oxydans.</title>
        <authorList>
            <person name="Prust C."/>
            <person name="Hoffmeister M."/>
            <person name="Liesegang H."/>
            <person name="Wiezer A."/>
            <person name="Fricke W.F."/>
            <person name="Ehrenreich A."/>
            <person name="Gottschalk G."/>
            <person name="Deppenmeier U."/>
        </authorList>
    </citation>
    <scope>NUCLEOTIDE SEQUENCE [LARGE SCALE GENOMIC DNA]</scope>
    <source>
        <strain>621H</strain>
    </source>
</reference>
<evidence type="ECO:0000255" key="1">
    <source>
        <dbReference type="HAMAP-Rule" id="MF_00435"/>
    </source>
</evidence>
<evidence type="ECO:0000255" key="2">
    <source>
        <dbReference type="PROSITE-ProRule" id="PRU01197"/>
    </source>
</evidence>
<evidence type="ECO:0000255" key="3">
    <source>
        <dbReference type="PROSITE-ProRule" id="PRU01198"/>
    </source>
</evidence>
<accession>Q5FRY8</accession>
<comment type="function">
    <text evidence="1">Involved in the biosynthesis of branched-chain amino acids (BCAA). Catalyzes an alkyl-migration followed by a ketol-acid reduction of (S)-2-acetolactate (S2AL) to yield (R)-2,3-dihydroxy-isovalerate. In the isomerase reaction, S2AL is rearranged via a Mg-dependent methyl migration to produce 3-hydroxy-3-methyl-2-ketobutyrate (HMKB). In the reductase reaction, this 2-ketoacid undergoes a metal-dependent reduction by NADPH to yield (R)-2,3-dihydroxy-isovalerate.</text>
</comment>
<comment type="catalytic activity">
    <reaction evidence="1">
        <text>(2R)-2,3-dihydroxy-3-methylbutanoate + NADP(+) = (2S)-2-acetolactate + NADPH + H(+)</text>
        <dbReference type="Rhea" id="RHEA:22068"/>
        <dbReference type="ChEBI" id="CHEBI:15378"/>
        <dbReference type="ChEBI" id="CHEBI:49072"/>
        <dbReference type="ChEBI" id="CHEBI:57783"/>
        <dbReference type="ChEBI" id="CHEBI:58349"/>
        <dbReference type="ChEBI" id="CHEBI:58476"/>
        <dbReference type="EC" id="1.1.1.86"/>
    </reaction>
</comment>
<comment type="catalytic activity">
    <reaction evidence="1">
        <text>(2R,3R)-2,3-dihydroxy-3-methylpentanoate + NADP(+) = (S)-2-ethyl-2-hydroxy-3-oxobutanoate + NADPH + H(+)</text>
        <dbReference type="Rhea" id="RHEA:13493"/>
        <dbReference type="ChEBI" id="CHEBI:15378"/>
        <dbReference type="ChEBI" id="CHEBI:49256"/>
        <dbReference type="ChEBI" id="CHEBI:49258"/>
        <dbReference type="ChEBI" id="CHEBI:57783"/>
        <dbReference type="ChEBI" id="CHEBI:58349"/>
        <dbReference type="EC" id="1.1.1.86"/>
    </reaction>
</comment>
<comment type="cofactor">
    <cofactor evidence="1">
        <name>Mg(2+)</name>
        <dbReference type="ChEBI" id="CHEBI:18420"/>
    </cofactor>
    <text evidence="1">Binds 2 magnesium ions per subunit.</text>
</comment>
<comment type="pathway">
    <text evidence="1">Amino-acid biosynthesis; L-isoleucine biosynthesis; L-isoleucine from 2-oxobutanoate: step 2/4.</text>
</comment>
<comment type="pathway">
    <text evidence="1">Amino-acid biosynthesis; L-valine biosynthesis; L-valine from pyruvate: step 2/4.</text>
</comment>
<comment type="similarity">
    <text evidence="1">Belongs to the ketol-acid reductoisomerase family.</text>
</comment>
<dbReference type="EC" id="1.1.1.86" evidence="1"/>
<dbReference type="EMBL" id="CP000009">
    <property type="protein sequence ID" value="AAW60858.1"/>
    <property type="molecule type" value="Genomic_DNA"/>
</dbReference>
<dbReference type="RefSeq" id="WP_011252650.1">
    <property type="nucleotide sequence ID" value="NZ_LT900338.1"/>
</dbReference>
<dbReference type="SMR" id="Q5FRY8"/>
<dbReference type="STRING" id="290633.GOX1089"/>
<dbReference type="GeneID" id="56905393"/>
<dbReference type="KEGG" id="gox:GOX1089"/>
<dbReference type="eggNOG" id="COG0059">
    <property type="taxonomic scope" value="Bacteria"/>
</dbReference>
<dbReference type="HOGENOM" id="CLU_033821_0_1_5"/>
<dbReference type="UniPathway" id="UPA00047">
    <property type="reaction ID" value="UER00056"/>
</dbReference>
<dbReference type="UniPathway" id="UPA00049">
    <property type="reaction ID" value="UER00060"/>
</dbReference>
<dbReference type="Proteomes" id="UP000006375">
    <property type="component" value="Chromosome"/>
</dbReference>
<dbReference type="GO" id="GO:0005829">
    <property type="term" value="C:cytosol"/>
    <property type="evidence" value="ECO:0007669"/>
    <property type="project" value="TreeGrafter"/>
</dbReference>
<dbReference type="GO" id="GO:0004455">
    <property type="term" value="F:ketol-acid reductoisomerase activity"/>
    <property type="evidence" value="ECO:0007669"/>
    <property type="project" value="UniProtKB-UniRule"/>
</dbReference>
<dbReference type="GO" id="GO:0000287">
    <property type="term" value="F:magnesium ion binding"/>
    <property type="evidence" value="ECO:0007669"/>
    <property type="project" value="UniProtKB-UniRule"/>
</dbReference>
<dbReference type="GO" id="GO:0050661">
    <property type="term" value="F:NADP binding"/>
    <property type="evidence" value="ECO:0007669"/>
    <property type="project" value="InterPro"/>
</dbReference>
<dbReference type="GO" id="GO:0009097">
    <property type="term" value="P:isoleucine biosynthetic process"/>
    <property type="evidence" value="ECO:0007669"/>
    <property type="project" value="UniProtKB-UniRule"/>
</dbReference>
<dbReference type="GO" id="GO:0009099">
    <property type="term" value="P:L-valine biosynthetic process"/>
    <property type="evidence" value="ECO:0007669"/>
    <property type="project" value="UniProtKB-UniRule"/>
</dbReference>
<dbReference type="FunFam" id="3.40.50.720:FF:000023">
    <property type="entry name" value="Ketol-acid reductoisomerase (NADP(+))"/>
    <property type="match status" value="1"/>
</dbReference>
<dbReference type="Gene3D" id="6.10.240.10">
    <property type="match status" value="1"/>
</dbReference>
<dbReference type="Gene3D" id="3.40.50.720">
    <property type="entry name" value="NAD(P)-binding Rossmann-like Domain"/>
    <property type="match status" value="1"/>
</dbReference>
<dbReference type="HAMAP" id="MF_00435">
    <property type="entry name" value="IlvC"/>
    <property type="match status" value="1"/>
</dbReference>
<dbReference type="InterPro" id="IPR008927">
    <property type="entry name" value="6-PGluconate_DH-like_C_sf"/>
</dbReference>
<dbReference type="InterPro" id="IPR013023">
    <property type="entry name" value="KARI"/>
</dbReference>
<dbReference type="InterPro" id="IPR000506">
    <property type="entry name" value="KARI_C"/>
</dbReference>
<dbReference type="InterPro" id="IPR013116">
    <property type="entry name" value="KARI_N"/>
</dbReference>
<dbReference type="InterPro" id="IPR014359">
    <property type="entry name" value="KARI_prok"/>
</dbReference>
<dbReference type="InterPro" id="IPR036291">
    <property type="entry name" value="NAD(P)-bd_dom_sf"/>
</dbReference>
<dbReference type="NCBIfam" id="TIGR00465">
    <property type="entry name" value="ilvC"/>
    <property type="match status" value="1"/>
</dbReference>
<dbReference type="NCBIfam" id="NF004017">
    <property type="entry name" value="PRK05479.1"/>
    <property type="match status" value="1"/>
</dbReference>
<dbReference type="NCBIfam" id="NF009940">
    <property type="entry name" value="PRK13403.1"/>
    <property type="match status" value="1"/>
</dbReference>
<dbReference type="PANTHER" id="PTHR21371">
    <property type="entry name" value="KETOL-ACID REDUCTOISOMERASE, MITOCHONDRIAL"/>
    <property type="match status" value="1"/>
</dbReference>
<dbReference type="PANTHER" id="PTHR21371:SF1">
    <property type="entry name" value="KETOL-ACID REDUCTOISOMERASE, MITOCHONDRIAL"/>
    <property type="match status" value="1"/>
</dbReference>
<dbReference type="Pfam" id="PF01450">
    <property type="entry name" value="KARI_C"/>
    <property type="match status" value="1"/>
</dbReference>
<dbReference type="Pfam" id="PF07991">
    <property type="entry name" value="KARI_N"/>
    <property type="match status" value="1"/>
</dbReference>
<dbReference type="PIRSF" id="PIRSF000116">
    <property type="entry name" value="IlvC_gammaproteo"/>
    <property type="match status" value="1"/>
</dbReference>
<dbReference type="SUPFAM" id="SSF48179">
    <property type="entry name" value="6-phosphogluconate dehydrogenase C-terminal domain-like"/>
    <property type="match status" value="1"/>
</dbReference>
<dbReference type="SUPFAM" id="SSF51735">
    <property type="entry name" value="NAD(P)-binding Rossmann-fold domains"/>
    <property type="match status" value="1"/>
</dbReference>
<dbReference type="PROSITE" id="PS51851">
    <property type="entry name" value="KARI_C"/>
    <property type="match status" value="1"/>
</dbReference>
<dbReference type="PROSITE" id="PS51850">
    <property type="entry name" value="KARI_N"/>
    <property type="match status" value="1"/>
</dbReference>
<name>ILVC_GLUOX</name>
<sequence>MRVYYDRDADLNLIKSKKVAIIGYGSQGHAHANNLKDSGVSDIVIGLRPTSSAVKKAEEAGFKVMEPGEAAAWADVVMVLTPDEGQGALYKESLEKNLKPGAALAFAHGLSIHFRIIEARPDLDVFLIAPKGPGHTVRSEYLRGGGVPSLVAVAQNASGNALEIALSYASANGGGRAGIIETTFKEEVETDLFGEQAVLCGGLVDLIRAGFETLVEGGYAPEMAYFECLHEMKLIVDLIYEGGIANMNYSISNTAEYGEYVTGPRIITPETKAEMKRVLTDIQDGTFVRNFILENQSGGVGFKAIRARNDAHPIEKTGEKLRAMMPWIAKGKLVDKAKN</sequence>
<protein>
    <recommendedName>
        <fullName evidence="1">Ketol-acid reductoisomerase (NADP(+))</fullName>
        <shortName evidence="1">KARI</shortName>
        <ecNumber evidence="1">1.1.1.86</ecNumber>
    </recommendedName>
    <alternativeName>
        <fullName evidence="1">Acetohydroxy-acid isomeroreductase</fullName>
        <shortName evidence="1">AHIR</shortName>
    </alternativeName>
    <alternativeName>
        <fullName evidence="1">Alpha-keto-beta-hydroxylacyl reductoisomerase</fullName>
    </alternativeName>
    <alternativeName>
        <fullName evidence="1">Ketol-acid reductoisomerase type 1</fullName>
    </alternativeName>
    <alternativeName>
        <fullName evidence="1">Ketol-acid reductoisomerase type I</fullName>
    </alternativeName>
</protein>
<proteinExistence type="inferred from homology"/>
<keyword id="KW-0028">Amino-acid biosynthesis</keyword>
<keyword id="KW-0100">Branched-chain amino acid biosynthesis</keyword>
<keyword id="KW-0460">Magnesium</keyword>
<keyword id="KW-0479">Metal-binding</keyword>
<keyword id="KW-0521">NADP</keyword>
<keyword id="KW-0560">Oxidoreductase</keyword>
<keyword id="KW-1185">Reference proteome</keyword>